<feature type="chain" id="PRO_0000341419" description="Inactive histone-lysine N-methyltransferase 2E">
    <location>
        <begin position="1"/>
        <end position="1858"/>
    </location>
</feature>
<feature type="domain" description="SET" evidence="4">
    <location>
        <begin position="330"/>
        <end position="447"/>
    </location>
</feature>
<feature type="zinc finger region" description="PHD-type" evidence="3">
    <location>
        <begin position="118"/>
        <end position="166"/>
    </location>
</feature>
<feature type="region of interest" description="Disordered" evidence="5">
    <location>
        <begin position="217"/>
        <end position="269"/>
    </location>
</feature>
<feature type="region of interest" description="Disordered" evidence="5">
    <location>
        <begin position="475"/>
        <end position="530"/>
    </location>
</feature>
<feature type="region of interest" description="Disordered" evidence="5">
    <location>
        <begin position="630"/>
        <end position="687"/>
    </location>
</feature>
<feature type="region of interest" description="Disordered" evidence="5">
    <location>
        <begin position="887"/>
        <end position="960"/>
    </location>
</feature>
<feature type="region of interest" description="Disordered" evidence="5">
    <location>
        <begin position="1039"/>
        <end position="1068"/>
    </location>
</feature>
<feature type="region of interest" description="Disordered" evidence="5">
    <location>
        <begin position="1164"/>
        <end position="1561"/>
    </location>
</feature>
<feature type="region of interest" description="Disordered" evidence="5">
    <location>
        <begin position="1581"/>
        <end position="1835"/>
    </location>
</feature>
<feature type="coiled-coil region" evidence="2">
    <location>
        <begin position="559"/>
        <end position="615"/>
    </location>
</feature>
<feature type="short sequence motif" description="HCFC1-binding motif (HBM)" evidence="12">
    <location>
        <begin position="63"/>
        <end position="66"/>
    </location>
</feature>
<feature type="compositionally biased region" description="Basic and acidic residues" evidence="5">
    <location>
        <begin position="232"/>
        <end position="250"/>
    </location>
</feature>
<feature type="compositionally biased region" description="Basic and acidic residues" evidence="5">
    <location>
        <begin position="494"/>
        <end position="504"/>
    </location>
</feature>
<feature type="compositionally biased region" description="Polar residues" evidence="5">
    <location>
        <begin position="505"/>
        <end position="520"/>
    </location>
</feature>
<feature type="compositionally biased region" description="Basic residues" evidence="5">
    <location>
        <begin position="646"/>
        <end position="670"/>
    </location>
</feature>
<feature type="compositionally biased region" description="Polar residues" evidence="5">
    <location>
        <begin position="672"/>
        <end position="687"/>
    </location>
</feature>
<feature type="compositionally biased region" description="Low complexity" evidence="5">
    <location>
        <begin position="887"/>
        <end position="901"/>
    </location>
</feature>
<feature type="compositionally biased region" description="Low complexity" evidence="5">
    <location>
        <begin position="933"/>
        <end position="957"/>
    </location>
</feature>
<feature type="compositionally biased region" description="Basic and acidic residues" evidence="5">
    <location>
        <begin position="1039"/>
        <end position="1048"/>
    </location>
</feature>
<feature type="compositionally biased region" description="Polar residues" evidence="5">
    <location>
        <begin position="1049"/>
        <end position="1068"/>
    </location>
</feature>
<feature type="compositionally biased region" description="Polar residues" evidence="5">
    <location>
        <begin position="1186"/>
        <end position="1206"/>
    </location>
</feature>
<feature type="compositionally biased region" description="Polar residues" evidence="5">
    <location>
        <begin position="1222"/>
        <end position="1235"/>
    </location>
</feature>
<feature type="compositionally biased region" description="Basic and acidic residues" evidence="5">
    <location>
        <begin position="1273"/>
        <end position="1282"/>
    </location>
</feature>
<feature type="compositionally biased region" description="Low complexity" evidence="5">
    <location>
        <begin position="1285"/>
        <end position="1303"/>
    </location>
</feature>
<feature type="compositionally biased region" description="Low complexity" evidence="5">
    <location>
        <begin position="1349"/>
        <end position="1362"/>
    </location>
</feature>
<feature type="compositionally biased region" description="Polar residues" evidence="5">
    <location>
        <begin position="1400"/>
        <end position="1432"/>
    </location>
</feature>
<feature type="compositionally biased region" description="Polar residues" evidence="5">
    <location>
        <begin position="1506"/>
        <end position="1542"/>
    </location>
</feature>
<feature type="compositionally biased region" description="Pro residues" evidence="5">
    <location>
        <begin position="1543"/>
        <end position="1553"/>
    </location>
</feature>
<feature type="compositionally biased region" description="Polar residues" evidence="5">
    <location>
        <begin position="1581"/>
        <end position="1599"/>
    </location>
</feature>
<feature type="compositionally biased region" description="Pro residues" evidence="5">
    <location>
        <begin position="1626"/>
        <end position="1637"/>
    </location>
</feature>
<feature type="compositionally biased region" description="Polar residues" evidence="5">
    <location>
        <begin position="1642"/>
        <end position="1651"/>
    </location>
</feature>
<feature type="compositionally biased region" description="Pro residues" evidence="5">
    <location>
        <begin position="1677"/>
        <end position="1687"/>
    </location>
</feature>
<feature type="compositionally biased region" description="Polar residues" evidence="5">
    <location>
        <begin position="1698"/>
        <end position="1711"/>
    </location>
</feature>
<feature type="compositionally biased region" description="Pro residues" evidence="5">
    <location>
        <begin position="1714"/>
        <end position="1724"/>
    </location>
</feature>
<feature type="compositionally biased region" description="Polar residues" evidence="5">
    <location>
        <begin position="1798"/>
        <end position="1808"/>
    </location>
</feature>
<feature type="binding site" evidence="13 15 33 34">
    <location>
        <position position="121"/>
    </location>
    <ligand>
        <name>Zn(2+)</name>
        <dbReference type="ChEBI" id="CHEBI:29105"/>
        <label>1</label>
    </ligand>
</feature>
<feature type="binding site" evidence="13 15 33 34">
    <location>
        <position position="123"/>
    </location>
    <ligand>
        <name>Zn(2+)</name>
        <dbReference type="ChEBI" id="CHEBI:29105"/>
        <label>1</label>
    </ligand>
</feature>
<feature type="binding site" evidence="13 15 33 34">
    <location>
        <position position="135"/>
    </location>
    <ligand>
        <name>Zn(2+)</name>
        <dbReference type="ChEBI" id="CHEBI:29105"/>
        <label>2</label>
    </ligand>
</feature>
<feature type="binding site" evidence="13 15 33 34">
    <location>
        <position position="138"/>
    </location>
    <ligand>
        <name>Zn(2+)</name>
        <dbReference type="ChEBI" id="CHEBI:29105"/>
        <label>2</label>
    </ligand>
</feature>
<feature type="binding site" evidence="13 15 33 34">
    <location>
        <position position="143"/>
    </location>
    <ligand>
        <name>Zn(2+)</name>
        <dbReference type="ChEBI" id="CHEBI:29105"/>
        <label>1</label>
    </ligand>
</feature>
<feature type="binding site" evidence="13 15 33 34">
    <location>
        <position position="146"/>
    </location>
    <ligand>
        <name>Zn(2+)</name>
        <dbReference type="ChEBI" id="CHEBI:29105"/>
        <label>1</label>
    </ligand>
</feature>
<feature type="binding site" evidence="13 15 33 34">
    <location>
        <position position="160"/>
    </location>
    <ligand>
        <name>Zn(2+)</name>
        <dbReference type="ChEBI" id="CHEBI:29105"/>
        <label>2</label>
    </ligand>
</feature>
<feature type="binding site" evidence="13 15 33 34">
    <location>
        <position position="163"/>
    </location>
    <ligand>
        <name>Zn(2+)</name>
        <dbReference type="ChEBI" id="CHEBI:29105"/>
        <label>2</label>
    </ligand>
</feature>
<feature type="modified residue" description="Phosphoserine" evidence="35">
    <location>
        <position position="623"/>
    </location>
</feature>
<feature type="modified residue" description="Phosphoserine" evidence="35">
    <location>
        <position position="837"/>
    </location>
</feature>
<feature type="modified residue" description="Phosphoserine" evidence="1">
    <location>
        <position position="845"/>
    </location>
</feature>
<feature type="modified residue" description="Phosphoserine" evidence="35">
    <location>
        <position position="1070"/>
    </location>
</feature>
<feature type="modified residue" description="Phosphoserine" evidence="35">
    <location>
        <position position="1273"/>
    </location>
</feature>
<feature type="modified residue" description="Phosphoserine" evidence="35">
    <location>
        <position position="1359"/>
    </location>
</feature>
<feature type="glycosylation site" description="O-linked (GlcNAc) serine" evidence="17">
    <location>
        <position position="435"/>
    </location>
</feature>
<feature type="glycosylation site" description="O-linked (GlcNAc) threonine" evidence="17">
    <location>
        <position position="440"/>
    </location>
</feature>
<feature type="splice variant" id="VSP_052803" description="In isoform 2." evidence="23">
    <location>
        <begin position="494"/>
        <end position="573"/>
    </location>
</feature>
<feature type="splice variant" id="VSP_052804" description="In isoform 3." evidence="21">
    <original>TREERKMEAILQAFARLEKREKRREQALERISTAK</original>
    <variation>VSWEASSLGLVTAALHMVIVAAFTWAFTLFFEVSE</variation>
    <location>
        <begin position="575"/>
        <end position="609"/>
    </location>
</feature>
<feature type="splice variant" id="VSP_052805" description="In isoform 3." evidence="21">
    <location>
        <begin position="610"/>
        <end position="1858"/>
    </location>
</feature>
<feature type="splice variant" id="VSP_052806" description="In isoform 4." evidence="23">
    <original>GENKSPLLLNDSCSLP</original>
    <variation>EYFFPRKFSRNKETHL</variation>
    <location>
        <begin position="850"/>
        <end position="865"/>
    </location>
</feature>
<feature type="splice variant" id="VSP_052807" description="In isoform 4." evidence="23">
    <location>
        <begin position="866"/>
        <end position="1858"/>
    </location>
</feature>
<feature type="splice variant" id="VSP_053834" description="In isoform NKp44L." evidence="22">
    <original>VSLLEYRKRQRE</original>
    <variation>SPVGNFVGSNVV</variation>
    <location>
        <begin position="1157"/>
        <end position="1168"/>
    </location>
</feature>
<feature type="splice variant" id="VSP_053835" description="In isoform NKp44L." evidence="22">
    <location>
        <begin position="1169"/>
        <end position="1858"/>
    </location>
</feature>
<feature type="splice variant" id="VSP_052808" description="In isoform 7." evidence="23">
    <location>
        <begin position="1282"/>
        <end position="1323"/>
    </location>
</feature>
<feature type="splice variant" id="VSP_052809" description="In isoform 6." evidence="23">
    <original>PSPHLENPPKSSTPHTPVQHGYLSPKPPSQQLGSPYRPHHSQSPQVGTPQREPQRNFYPAAQNLPANTQQATSGTLFTQTPSGQSSATYSQFNQQSLNSTAPPPPPPPPPSSSYYQNQQPSANFQNYNQLKGSLSQQTVFTSGPNQALPGTTSQQTVPGHHVTPGHFLPSQNPTIHHQT</original>
    <variation>SSPSTTPSIHRTPRSTSTTPACCKFSTPTTPSAATFQCFGFWASYHISSSLTPPTSSRTSTFSFECSSNCTTVSLTSYTSYHFGTGTPAPAFWNRATLSITCHRSSSPAPRTKQYSNTYCFRVLSSSWLCGPATWGSRTSAGISSAWTDSNSQSTGATNISKQLPWVRVALKWTPKTFF</variation>
    <location>
        <begin position="1443"/>
        <end position="1621"/>
    </location>
</feature>
<feature type="splice variant" id="VSP_052810" description="In isoform 5." evidence="23">
    <original>ANTQQATSGTLFTQTPSGQSSATYSQFNQQSLNSTAPPPPPPPPPSSSYYQNQQPSANFQNYNQLKGSLSQQTVFTSGPNQALPGTTSQQTVPGHHVTPGHFLPSQNPTIHHQTAAAVVPPPPPPPPAPGPHLVQQPNSHQQHSVA</original>
    <variation>VFWLLGIIPHQLKPYTTHLIKDLHFFLRVLIQLYHRIPHKLHIIPLWDRDPSTSLLEQGHIVHYLSQVLISSPKDQTVFQHLLLQGSVLILALWPCHMGFKDLSRHLQCLDRFQFTEHRCHQHFKTITMGQGGIKMDSKNIFLNVL</variation>
    <location>
        <begin position="1508"/>
        <end position="1653"/>
    </location>
</feature>
<feature type="splice variant" id="VSP_052811" description="In isoform 6." evidence="23">
    <location>
        <begin position="1622"/>
        <end position="1858"/>
    </location>
</feature>
<feature type="splice variant" id="VSP_052812" description="In isoform 5." evidence="23">
    <location>
        <begin position="1654"/>
        <end position="1858"/>
    </location>
</feature>
<feature type="sequence variant" id="VAR_083126" description="In ODLURO; dbSNP:rs74375534." evidence="19">
    <original>V</original>
    <variation>I</variation>
    <location>
        <position position="140"/>
    </location>
</feature>
<feature type="sequence variant" id="VAR_083127" description="In ODLURO." evidence="19">
    <location>
        <begin position="151"/>
        <end position="1858"/>
    </location>
</feature>
<feature type="sequence variant" id="VAR_083128" description="In ODLURO; dbSNP:rs868001076." evidence="19">
    <original>Y</original>
    <variation>H</variation>
    <location>
        <position position="284"/>
    </location>
</feature>
<feature type="sequence variant" id="VAR_083129" description="In ODLURO." evidence="19">
    <location>
        <begin position="754"/>
        <end position="1858"/>
    </location>
</feature>
<feature type="sequence variant" id="VAR_083130" description="In ODLURO." evidence="19">
    <location>
        <begin position="818"/>
        <end position="1858"/>
    </location>
</feature>
<feature type="sequence variant" id="VAR_083131" description="In ODLURO." evidence="19">
    <location>
        <begin position="874"/>
        <end position="1858"/>
    </location>
</feature>
<feature type="sequence variant" id="VAR_083132" description="In ODLURO; dbSNP:rs1584803942." evidence="19">
    <original>D</original>
    <variation>V</variation>
    <location>
        <position position="907"/>
    </location>
</feature>
<feature type="sequence variant" id="VAR_083133" description="In ODLURO." evidence="19">
    <location>
        <begin position="1024"/>
        <end position="1858"/>
    </location>
</feature>
<feature type="sequence variant" id="VAR_083134" description="In ODLURO." evidence="19">
    <location>
        <begin position="1185"/>
        <end position="1858"/>
    </location>
</feature>
<feature type="sequence variant" id="VAR_083135" description="In ODLURO." evidence="19">
    <location>
        <begin position="1224"/>
        <end position="1858"/>
    </location>
</feature>
<feature type="sequence variant" id="VAR_083136" description="In dbSNP:rs140764929." evidence="19">
    <original>P</original>
    <variation>L</variation>
    <location>
        <position position="1376"/>
    </location>
</feature>
<feature type="sequence variant" id="VAR_083137" description="In ODLURO; dbSNP:rs1584816566." evidence="19">
    <original>P</original>
    <variation>S</variation>
    <location>
        <position position="1376"/>
    </location>
</feature>
<feature type="sequence variant" id="VAR_052656" description="In dbSNP:rs35605511.">
    <original>S</original>
    <variation>P</variation>
    <location>
        <position position="1424"/>
    </location>
</feature>
<feature type="mutagenesis site" description="Abolishes interaction with HCFC1." evidence="12">
    <original>DHNY</original>
    <variation>AAAA</variation>
    <location>
        <begin position="63"/>
        <end position="66"/>
    </location>
</feature>
<feature type="mutagenesis site" description="No effect on binding to tri-methylated 'Lys-4' of histone H3 (H3K4me3)." evidence="13">
    <original>F</original>
    <variation>A</variation>
    <location>
        <position position="125"/>
    </location>
</feature>
<feature type="mutagenesis site" description="Severe reduction in the binding to tri-methylated 'Lys-4' of histone H3 (H3K4me3)." evidence="13">
    <original>D</original>
    <variation>K</variation>
    <location>
        <position position="128"/>
    </location>
</feature>
<feature type="mutagenesis site" description="Severe reduction in the binding to tri-methylated 'Lys-4' of histone H3 (H3K4me3)." evidence="13">
    <original>Y</original>
    <variation>A</variation>
    <variation>K</variation>
    <location>
        <position position="131"/>
    </location>
</feature>
<feature type="mutagenesis site" description="Loss of binding to tri-methylated 'Lys-4' of histone H3 (H3K4me3)." evidence="13">
    <original>W</original>
    <variation>A</variation>
    <location>
        <position position="141"/>
    </location>
</feature>
<feature type="mutagenesis site" description="Fails to activate the cell cycle regulated element (CCRE) in the cyclin A promoter." evidence="10">
    <original>C</original>
    <variation>A</variation>
    <location>
        <position position="411"/>
    </location>
</feature>
<feature type="sequence conflict" description="In Ref. 1; AAM74947, 2; AGE34449 and 7; AK000940." evidence="24" ref="1 2 7">
    <original>K</original>
    <variation>E</variation>
    <location>
        <position position="496"/>
    </location>
</feature>
<feature type="sequence conflict" description="In Ref. 1; AAM74947, 2; AGE34449 and 7; AK000940." evidence="24" ref="1 2 7">
    <original>T</original>
    <variation>A</variation>
    <location>
        <position position="516"/>
    </location>
</feature>
<feature type="sequence conflict" description="In Ref. 7; AK000940." evidence="24" ref="7">
    <original>R</original>
    <variation>K</variation>
    <location>
        <position position="594"/>
    </location>
</feature>
<feature type="sequence conflict" description="In Ref. 1; AAM74947." evidence="24" ref="1">
    <original>V</original>
    <variation>A</variation>
    <location>
        <position position="1020"/>
    </location>
</feature>
<feature type="sequence conflict" description="In Ref. 1; AAM74947." evidence="24" ref="1">
    <original>R</original>
    <variation>S</variation>
    <location>
        <position position="1073"/>
    </location>
</feature>
<feature type="sequence conflict" description="In Ref. 1; AAM74947." evidence="24" ref="1">
    <original>S</original>
    <variation>P</variation>
    <location>
        <position position="1090"/>
    </location>
</feature>
<feature type="sequence conflict" description="In Ref. 1; AAM74947." evidence="24" ref="1">
    <original>F</original>
    <variation>S</variation>
    <location>
        <position position="1099"/>
    </location>
</feature>
<feature type="sequence conflict" description="In Ref. 1; AAM74947." evidence="24" ref="1">
    <original>E</original>
    <variation>K</variation>
    <location>
        <position position="1168"/>
    </location>
</feature>
<feature type="strand" evidence="37">
    <location>
        <begin position="132"/>
        <end position="134"/>
    </location>
</feature>
<feature type="turn" evidence="37">
    <location>
        <begin position="136"/>
        <end position="138"/>
    </location>
</feature>
<feature type="strand" evidence="37">
    <location>
        <begin position="141"/>
        <end position="143"/>
    </location>
</feature>
<feature type="helix" evidence="37">
    <location>
        <begin position="144"/>
        <end position="147"/>
    </location>
</feature>
<feature type="strand" evidence="36">
    <location>
        <begin position="156"/>
        <end position="158"/>
    </location>
</feature>
<feature type="turn" evidence="37">
    <location>
        <begin position="161"/>
        <end position="165"/>
    </location>
</feature>
<feature type="helix" evidence="37">
    <location>
        <begin position="170"/>
        <end position="178"/>
    </location>
</feature>
<feature type="strand" evidence="38">
    <location>
        <begin position="344"/>
        <end position="347"/>
    </location>
</feature>
<feature type="strand" evidence="38">
    <location>
        <begin position="354"/>
        <end position="357"/>
    </location>
</feature>
<feature type="strand" evidence="38">
    <location>
        <begin position="360"/>
        <end position="364"/>
    </location>
</feature>
<feature type="helix" evidence="38">
    <location>
        <begin position="365"/>
        <end position="370"/>
    </location>
</feature>
<feature type="strand" evidence="38">
    <location>
        <begin position="382"/>
        <end position="385"/>
    </location>
</feature>
<feature type="turn" evidence="38">
    <location>
        <begin position="387"/>
        <end position="390"/>
    </location>
</feature>
<feature type="strand" evidence="38">
    <location>
        <begin position="393"/>
        <end position="396"/>
    </location>
</feature>
<feature type="helix" evidence="38">
    <location>
        <begin position="403"/>
        <end position="406"/>
    </location>
</feature>
<feature type="strand" evidence="38">
    <location>
        <begin position="414"/>
        <end position="422"/>
    </location>
</feature>
<feature type="strand" evidence="38">
    <location>
        <begin position="425"/>
        <end position="434"/>
    </location>
</feature>
<reference evidence="24 29" key="1">
    <citation type="journal article" date="2002" name="Oncogene">
        <title>MLL5, a homolog of Drosophila trithorax located within a segment of chromosome band 7q22 implicated in myeloid leukemia.</title>
        <authorList>
            <person name="Emerling B.M."/>
            <person name="Bonifas J."/>
            <person name="Kratz C.P."/>
            <person name="Donovan S."/>
            <person name="Taylor B.R."/>
            <person name="Green E.D."/>
            <person name="Le Beau M.M."/>
            <person name="Shannon K.M."/>
        </authorList>
    </citation>
    <scope>NUCLEOTIDE SEQUENCE [MRNA] (ISOFORM 1)</scope>
    <scope>TISSUE SPECIFICITY</scope>
</reference>
<reference key="2">
    <citation type="journal article" date="2013" name="Blood">
        <title>Identification of a cellular ligand for the natural cytotoxicity receptor NKp44.</title>
        <authorList>
            <person name="Baychelier F."/>
            <person name="Sennepin A."/>
            <person name="Ermonval M."/>
            <person name="Dorgham K."/>
            <person name="Debre P."/>
            <person name="Vieillard V."/>
        </authorList>
    </citation>
    <scope>NUCLEOTIDE SEQUENCE [MRNA] (ISOFORM NKP44L)</scope>
    <scope>FUNCTION (ISOFORM NKP44L)</scope>
    <scope>SUBCELLULAR LOCATION (ISOFORM NKP44L)</scope>
    <scope>TISSUE SPECIFICITY</scope>
</reference>
<reference evidence="24 30" key="3">
    <citation type="submission" date="2003-10" db="EMBL/GenBank/DDBJ databases">
        <title>Identification and characterization of a novel gene located in the commonly deleted region 7q22-q31.1 in myeloid leukemias.</title>
        <authorList>
            <person name="Dohner K."/>
            <person name="Obermiller R.T."/>
            <person name="Lipka D.B."/>
            <person name="Hofmann K."/>
            <person name="Habdank M."/>
            <person name="Fazekas G."/>
            <person name="Frohling S."/>
            <person name="Lichter P."/>
            <person name="Scherer S.W."/>
            <person name="Dohner H."/>
        </authorList>
    </citation>
    <scope>NUCLEOTIDE SEQUENCE [MRNA] (ISOFORMS 1 AND 2)</scope>
    <scope>NUCLEOTIDE SEQUENCE [MRNA] OF 624-1858 (ISOFORM 4)</scope>
    <scope>NUCLEOTIDE SEQUENCE [MRNA] OF 1149-1251 (ISOFORMS 1/2/4/6/7)</scope>
    <scope>NUCLEOTIDE SEQUENCE [MRNA] OF 1190-1355 (ISOFORM 7)</scope>
    <scope>NUCLEOTIDE SEQUENCE [MRNA] OF 1415-1858 (ISOFORMS 5 AND 6)</scope>
    <source>
        <tissue evidence="31">Brain</tissue>
        <tissue evidence="32">Peripheral blood leukocyte</tissue>
    </source>
</reference>
<reference key="4">
    <citation type="journal article" date="2003" name="Nature">
        <title>The DNA sequence of human chromosome 7.</title>
        <authorList>
            <person name="Hillier L.W."/>
            <person name="Fulton R.S."/>
            <person name="Fulton L.A."/>
            <person name="Graves T.A."/>
            <person name="Pepin K.H."/>
            <person name="Wagner-McPherson C."/>
            <person name="Layman D."/>
            <person name="Maas J."/>
            <person name="Jaeger S."/>
            <person name="Walker R."/>
            <person name="Wylie K."/>
            <person name="Sekhon M."/>
            <person name="Becker M.C."/>
            <person name="O'Laughlin M.D."/>
            <person name="Schaller M.E."/>
            <person name="Fewell G.A."/>
            <person name="Delehaunty K.D."/>
            <person name="Miner T.L."/>
            <person name="Nash W.E."/>
            <person name="Cordes M."/>
            <person name="Du H."/>
            <person name="Sun H."/>
            <person name="Edwards J."/>
            <person name="Bradshaw-Cordum H."/>
            <person name="Ali J."/>
            <person name="Andrews S."/>
            <person name="Isak A."/>
            <person name="Vanbrunt A."/>
            <person name="Nguyen C."/>
            <person name="Du F."/>
            <person name="Lamar B."/>
            <person name="Courtney L."/>
            <person name="Kalicki J."/>
            <person name="Ozersky P."/>
            <person name="Bielicki L."/>
            <person name="Scott K."/>
            <person name="Holmes A."/>
            <person name="Harkins R."/>
            <person name="Harris A."/>
            <person name="Strong C.M."/>
            <person name="Hou S."/>
            <person name="Tomlinson C."/>
            <person name="Dauphin-Kohlberg S."/>
            <person name="Kozlowicz-Reilly A."/>
            <person name="Leonard S."/>
            <person name="Rohlfing T."/>
            <person name="Rock S.M."/>
            <person name="Tin-Wollam A.-M."/>
            <person name="Abbott A."/>
            <person name="Minx P."/>
            <person name="Maupin R."/>
            <person name="Strowmatt C."/>
            <person name="Latreille P."/>
            <person name="Miller N."/>
            <person name="Johnson D."/>
            <person name="Murray J."/>
            <person name="Woessner J.P."/>
            <person name="Wendl M.C."/>
            <person name="Yang S.-P."/>
            <person name="Schultz B.R."/>
            <person name="Wallis J.W."/>
            <person name="Spieth J."/>
            <person name="Bieri T.A."/>
            <person name="Nelson J.O."/>
            <person name="Berkowicz N."/>
            <person name="Wohldmann P.E."/>
            <person name="Cook L.L."/>
            <person name="Hickenbotham M.T."/>
            <person name="Eldred J."/>
            <person name="Williams D."/>
            <person name="Bedell J.A."/>
            <person name="Mardis E.R."/>
            <person name="Clifton S.W."/>
            <person name="Chissoe S.L."/>
            <person name="Marra M.A."/>
            <person name="Raymond C."/>
            <person name="Haugen E."/>
            <person name="Gillett W."/>
            <person name="Zhou Y."/>
            <person name="James R."/>
            <person name="Phelps K."/>
            <person name="Iadanoto S."/>
            <person name="Bubb K."/>
            <person name="Simms E."/>
            <person name="Levy R."/>
            <person name="Clendenning J."/>
            <person name="Kaul R."/>
            <person name="Kent W.J."/>
            <person name="Furey T.S."/>
            <person name="Baertsch R.A."/>
            <person name="Brent M.R."/>
            <person name="Keibler E."/>
            <person name="Flicek P."/>
            <person name="Bork P."/>
            <person name="Suyama M."/>
            <person name="Bailey J.A."/>
            <person name="Portnoy M.E."/>
            <person name="Torrents D."/>
            <person name="Chinwalla A.T."/>
            <person name="Gish W.R."/>
            <person name="Eddy S.R."/>
            <person name="McPherson J.D."/>
            <person name="Olson M.V."/>
            <person name="Eichler E.E."/>
            <person name="Green E.D."/>
            <person name="Waterston R.H."/>
            <person name="Wilson R.K."/>
        </authorList>
    </citation>
    <scope>NUCLEOTIDE SEQUENCE [LARGE SCALE GENOMIC DNA]</scope>
</reference>
<reference evidence="24 30" key="5">
    <citation type="submission" date="2005-07" db="EMBL/GenBank/DDBJ databases">
        <authorList>
            <person name="Mural R.J."/>
            <person name="Istrail S."/>
            <person name="Sutton G.G."/>
            <person name="Florea L."/>
            <person name="Halpern A.L."/>
            <person name="Mobarry C.M."/>
            <person name="Lippert R."/>
            <person name="Walenz B."/>
            <person name="Shatkay H."/>
            <person name="Dew I."/>
            <person name="Miller J.R."/>
            <person name="Flanigan M.J."/>
            <person name="Edwards N.J."/>
            <person name="Bolanos R."/>
            <person name="Fasulo D."/>
            <person name="Halldorsson B.V."/>
            <person name="Hannenhalli S."/>
            <person name="Turner R."/>
            <person name="Yooseph S."/>
            <person name="Lu F."/>
            <person name="Nusskern D.R."/>
            <person name="Shue B.C."/>
            <person name="Zheng X.H."/>
            <person name="Zhong F."/>
            <person name="Delcher A.L."/>
            <person name="Huson D.H."/>
            <person name="Kravitz S.A."/>
            <person name="Mouchard L."/>
            <person name="Reinert K."/>
            <person name="Remington K.A."/>
            <person name="Clark A.G."/>
            <person name="Waterman M.S."/>
            <person name="Eichler E.E."/>
            <person name="Adams M.D."/>
            <person name="Hunkapiller M.W."/>
            <person name="Myers E.W."/>
            <person name="Venter J.C."/>
        </authorList>
    </citation>
    <scope>NUCLEOTIDE SEQUENCE [LARGE SCALE GENOMIC DNA]</scope>
</reference>
<reference evidence="24 28" key="6">
    <citation type="journal article" date="2004" name="Genome Res.">
        <title>The status, quality, and expansion of the NIH full-length cDNA project: the Mammalian Gene Collection (MGC).</title>
        <authorList>
            <consortium name="The MGC Project Team"/>
        </authorList>
    </citation>
    <scope>NUCLEOTIDE SEQUENCE [LARGE SCALE MRNA] (ISOFORM 3)</scope>
    <scope>NUCLEOTIDE SEQUENCE [LARGE SCALE MRNA] OF 1-491</scope>
    <source>
        <tissue evidence="25">Choriocarcinoma</tissue>
        <tissue evidence="26">Liver</tissue>
        <tissue evidence="27">Uterus</tissue>
    </source>
</reference>
<reference evidence="24" key="7">
    <citation type="journal article" date="2004" name="Nat. Genet.">
        <title>Complete sequencing and characterization of 21,243 full-length human cDNAs.</title>
        <authorList>
            <person name="Ota T."/>
            <person name="Suzuki Y."/>
            <person name="Nishikawa T."/>
            <person name="Otsuki T."/>
            <person name="Sugiyama T."/>
            <person name="Irie R."/>
            <person name="Wakamatsu A."/>
            <person name="Hayashi K."/>
            <person name="Sato H."/>
            <person name="Nagai K."/>
            <person name="Kimura K."/>
            <person name="Makita H."/>
            <person name="Sekine M."/>
            <person name="Obayashi M."/>
            <person name="Nishi T."/>
            <person name="Shibahara T."/>
            <person name="Tanaka T."/>
            <person name="Ishii S."/>
            <person name="Yamamoto J."/>
            <person name="Saito K."/>
            <person name="Kawai Y."/>
            <person name="Isono Y."/>
            <person name="Nakamura Y."/>
            <person name="Nagahari K."/>
            <person name="Murakami K."/>
            <person name="Yasuda T."/>
            <person name="Iwayanagi T."/>
            <person name="Wagatsuma M."/>
            <person name="Shiratori A."/>
            <person name="Sudo H."/>
            <person name="Hosoiri T."/>
            <person name="Kaku Y."/>
            <person name="Kodaira H."/>
            <person name="Kondo H."/>
            <person name="Sugawara M."/>
            <person name="Takahashi M."/>
            <person name="Kanda K."/>
            <person name="Yokoi T."/>
            <person name="Furuya T."/>
            <person name="Kikkawa E."/>
            <person name="Omura Y."/>
            <person name="Abe K."/>
            <person name="Kamihara K."/>
            <person name="Katsuta N."/>
            <person name="Sato K."/>
            <person name="Tanikawa M."/>
            <person name="Yamazaki M."/>
            <person name="Ninomiya K."/>
            <person name="Ishibashi T."/>
            <person name="Yamashita H."/>
            <person name="Murakawa K."/>
            <person name="Fujimori K."/>
            <person name="Tanai H."/>
            <person name="Kimata M."/>
            <person name="Watanabe M."/>
            <person name="Hiraoka S."/>
            <person name="Chiba Y."/>
            <person name="Ishida S."/>
            <person name="Ono Y."/>
            <person name="Takiguchi S."/>
            <person name="Watanabe S."/>
            <person name="Yosida M."/>
            <person name="Hotuta T."/>
            <person name="Kusano J."/>
            <person name="Kanehori K."/>
            <person name="Takahashi-Fujii A."/>
            <person name="Hara H."/>
            <person name="Tanase T.-O."/>
            <person name="Nomura Y."/>
            <person name="Togiya S."/>
            <person name="Komai F."/>
            <person name="Hara R."/>
            <person name="Takeuchi K."/>
            <person name="Arita M."/>
            <person name="Imose N."/>
            <person name="Musashino K."/>
            <person name="Yuuki H."/>
            <person name="Oshima A."/>
            <person name="Sasaki N."/>
            <person name="Aotsuka S."/>
            <person name="Yoshikawa Y."/>
            <person name="Matsunawa H."/>
            <person name="Ichihara T."/>
            <person name="Shiohata N."/>
            <person name="Sano S."/>
            <person name="Moriya S."/>
            <person name="Momiyama H."/>
            <person name="Satoh N."/>
            <person name="Takami S."/>
            <person name="Terashima Y."/>
            <person name="Suzuki O."/>
            <person name="Nakagawa S."/>
            <person name="Senoh A."/>
            <person name="Mizoguchi H."/>
            <person name="Goto Y."/>
            <person name="Shimizu F."/>
            <person name="Wakebe H."/>
            <person name="Hishigaki H."/>
            <person name="Watanabe T."/>
            <person name="Sugiyama A."/>
            <person name="Takemoto M."/>
            <person name="Kawakami B."/>
            <person name="Yamazaki M."/>
            <person name="Watanabe K."/>
            <person name="Kumagai A."/>
            <person name="Itakura S."/>
            <person name="Fukuzumi Y."/>
            <person name="Fujimori Y."/>
            <person name="Komiyama M."/>
            <person name="Tashiro H."/>
            <person name="Tanigami A."/>
            <person name="Fujiwara T."/>
            <person name="Ono T."/>
            <person name="Yamada K."/>
            <person name="Fujii Y."/>
            <person name="Ozaki K."/>
            <person name="Hirao M."/>
            <person name="Ohmori Y."/>
            <person name="Kawabata A."/>
            <person name="Hikiji T."/>
            <person name="Kobatake N."/>
            <person name="Inagaki H."/>
            <person name="Ikema Y."/>
            <person name="Okamoto S."/>
            <person name="Okitani R."/>
            <person name="Kawakami T."/>
            <person name="Noguchi S."/>
            <person name="Itoh T."/>
            <person name="Shigeta K."/>
            <person name="Senba T."/>
            <person name="Matsumura K."/>
            <person name="Nakajima Y."/>
            <person name="Mizuno T."/>
            <person name="Morinaga M."/>
            <person name="Sasaki M."/>
            <person name="Togashi T."/>
            <person name="Oyama M."/>
            <person name="Hata H."/>
            <person name="Watanabe M."/>
            <person name="Komatsu T."/>
            <person name="Mizushima-Sugano J."/>
            <person name="Satoh T."/>
            <person name="Shirai Y."/>
            <person name="Takahashi Y."/>
            <person name="Nakagawa K."/>
            <person name="Okumura K."/>
            <person name="Nagase T."/>
            <person name="Nomura N."/>
            <person name="Kikuchi H."/>
            <person name="Masuho Y."/>
            <person name="Yamashita R."/>
            <person name="Nakai K."/>
            <person name="Yada T."/>
            <person name="Nakamura Y."/>
            <person name="Ohara O."/>
            <person name="Isogai T."/>
            <person name="Sugano S."/>
        </authorList>
    </citation>
    <scope>NUCLEOTIDE SEQUENCE [LARGE SCALE MRNA] OF 1-594</scope>
    <source>
        <tissue>Embryo</tissue>
    </source>
</reference>
<reference evidence="24" key="8">
    <citation type="journal article" date="2004" name="Proc. Natl. Acad. Sci. U.S.A.">
        <title>MLL 5 protein forms intranuclear foci, and overexpression inhibits cell cycle progression.</title>
        <authorList>
            <person name="Deng L.-W."/>
            <person name="Chiu I."/>
            <person name="Strominger J.L."/>
        </authorList>
    </citation>
    <scope>FUNCTION</scope>
    <scope>SUBCELLULAR LOCATION</scope>
</reference>
<reference key="9">
    <citation type="journal article" date="2008" name="Int. J. Biochem. Cell Biol.">
        <title>RNA interference against mixed lineage leukemia 5 resulted in cell cycle arrest.</title>
        <authorList>
            <person name="Cheng F."/>
            <person name="Liu J."/>
            <person name="Zhou S.H."/>
            <person name="Wang X.N."/>
            <person name="Chew J.F."/>
            <person name="Deng L.-W."/>
        </authorList>
    </citation>
    <scope>FUNCTION</scope>
</reference>
<reference key="10">
    <citation type="journal article" date="2009" name="Nature">
        <title>GlcNAcylation of a histone methyltransferase in retinoic-acid-induced granulopoiesis.</title>
        <authorList>
            <person name="Fujiki R."/>
            <person name="Chikanishi T."/>
            <person name="Hashiba W."/>
            <person name="Ito H."/>
            <person name="Takada I."/>
            <person name="Roeder R.G."/>
            <person name="Kitagawa H."/>
            <person name="Kato S."/>
        </authorList>
    </citation>
    <scope>RETRACTED PAPER</scope>
</reference>
<reference key="11">
    <citation type="journal article" date="2014" name="Nature">
        <title>Retraction: GlcNAcylation of a histone methyltransferase in retinoic-acid-induced granulopoiesis.</title>
        <authorList>
            <person name="Fujiki R."/>
            <person name="Chikanishi T."/>
            <person name="Hashiba W."/>
            <person name="Ito H."/>
            <person name="Takada I."/>
            <person name="Roeder R.G."/>
            <person name="Kitagawa H."/>
            <person name="Kato S."/>
        </authorList>
    </citation>
    <scope>CAUTION</scope>
    <scope>RETRACTION NOTICE OF PUBMED:19377461</scope>
</reference>
<reference key="12">
    <citation type="journal article" date="2013" name="J. Proteome Res.">
        <title>Toward a comprehensive characterization of a human cancer cell phosphoproteome.</title>
        <authorList>
            <person name="Zhou H."/>
            <person name="Di Palma S."/>
            <person name="Preisinger C."/>
            <person name="Peng M."/>
            <person name="Polat A.N."/>
            <person name="Heck A.J."/>
            <person name="Mohammed S."/>
        </authorList>
    </citation>
    <scope>PHOSPHORYLATION [LARGE SCALE ANALYSIS] AT SER-623; SER-837; SER-1070; SER-1273 AND SER-1359</scope>
    <scope>IDENTIFICATION BY MASS SPECTROMETRY [LARGE SCALE ANALYSIS]</scope>
    <source>
        <tissue>Cervix carcinoma</tissue>
        <tissue>Erythroleukemia</tissue>
    </source>
</reference>
<reference key="13">
    <citation type="journal article" date="2014" name="J. Proteomics">
        <title>An enzyme assisted RP-RPLC approach for in-depth analysis of human liver phosphoproteome.</title>
        <authorList>
            <person name="Bian Y."/>
            <person name="Song C."/>
            <person name="Cheng K."/>
            <person name="Dong M."/>
            <person name="Wang F."/>
            <person name="Huang J."/>
            <person name="Sun D."/>
            <person name="Wang L."/>
            <person name="Ye M."/>
            <person name="Zou H."/>
        </authorList>
    </citation>
    <scope>IDENTIFICATION BY MASS SPECTROMETRY [LARGE SCALE ANALYSIS]</scope>
    <source>
        <tissue>Liver</tissue>
    </source>
</reference>
<reference key="14">
    <citation type="journal article" date="2009" name="Proc. Natl. Acad. Sci. U.S.A.">
        <title>MLL5, a trithorax homolog, indirectly regulates H3K4 methylation, represses cyclin A2 expression, and promotes myogenic differentiation.</title>
        <authorList>
            <person name="Sebastian S."/>
            <person name="Sreenivas P."/>
            <person name="Sambasivan R."/>
            <person name="Cheedipudi S."/>
            <person name="Kandalla P."/>
            <person name="Pavlath G.K."/>
            <person name="Dhawan J."/>
        </authorList>
    </citation>
    <scope>LACK OF CATALYTIC ACTIVITY</scope>
    <scope>MUTAGENESIS OF CYS-411</scope>
</reference>
<reference key="15">
    <citation type="journal article" date="2013" name="J. Biol. Chem.">
        <title>Mixed lineage leukemia 5 (MLL5) protein regulates cell cycle progression and E2F1-responsive gene expression via association with host cell factor-1 (HCF-1).</title>
        <authorList>
            <person name="Zhou P."/>
            <person name="Wang Z."/>
            <person name="Yuan X."/>
            <person name="Zhou C."/>
            <person name="Liu L."/>
            <person name="Wan X."/>
            <person name="Zhang F."/>
            <person name="Ding X."/>
            <person name="Wang C."/>
            <person name="Xiong S."/>
            <person name="Wang Z."/>
            <person name="Yuan J."/>
            <person name="Li Q."/>
            <person name="Zhang Y."/>
        </authorList>
    </citation>
    <scope>FUNCTION</scope>
    <scope>INTERACTION WITH HCFC1; E2F1 AND OGT (ISOFORM 3)</scope>
    <scope>SUBCELLULAR LOCATION</scope>
    <scope>MOTIF</scope>
    <scope>MUTAGENESIS OF 62-ASP--TYR-66</scope>
</reference>
<reference key="16">
    <citation type="journal article" date="2015" name="PLoS ONE">
        <title>Mixed lineage leukemia 5 (MLL5) protein stability is cooperatively regulated by O-GlcNac transferase (OGT) and ubiquitin specific protease 7 (USP7).</title>
        <authorList>
            <person name="Ding X."/>
            <person name="Jiang W."/>
            <person name="Zhou P."/>
            <person name="Liu L."/>
            <person name="Wan X."/>
            <person name="Yuan X."/>
            <person name="Wang X."/>
            <person name="Chen M."/>
            <person name="Chen J."/>
            <person name="Yang J."/>
            <person name="Kong C."/>
            <person name="Li B."/>
            <person name="Peng C."/>
            <person name="Wong C.C."/>
            <person name="Hou F."/>
            <person name="Zhang Y."/>
        </authorList>
    </citation>
    <scope>IDENTIFICATION IN A COMPLEX WITH OGT AND USP7</scope>
    <scope>INTERACTION WITH OGT AND USP7</scope>
    <scope>SUBCELLULAR LOCATION</scope>
    <scope>GLYCOSYLATION AT SER-435 AND THR-440</scope>
    <scope>UBIQUITINATION</scope>
</reference>
<reference key="17">
    <citation type="journal article" date="2013" name="PLoS ONE">
        <title>Solution NMR structure and histone binding of the PHD domain of human MLL5.</title>
        <authorList>
            <person name="Lemak A."/>
            <person name="Yee A."/>
            <person name="Wu H."/>
            <person name="Yap D."/>
            <person name="Zeng H."/>
            <person name="Dombrovski L."/>
            <person name="Houliston S."/>
            <person name="Aparicio S."/>
            <person name="Arrowsmith C.H."/>
        </authorList>
    </citation>
    <scope>STRUCTURE BY NMR OF 109-188 IN COMPLEX WITH ZINC</scope>
    <scope>FUNCTION</scope>
    <scope>DOMAIN</scope>
</reference>
<reference key="18">
    <citation type="journal article" date="2013" name="Proc. Natl. Acad. Sci. U.S.A.">
        <title>Molecular basis for chromatin binding and regulation of MLL5.</title>
        <authorList>
            <person name="Ali M."/>
            <person name="Rincon-Arano H."/>
            <person name="Zhao W."/>
            <person name="Rothbart S.B."/>
            <person name="Tong Q."/>
            <person name="Parkhurst S.M."/>
            <person name="Strahl B.D."/>
            <person name="Deng L.W."/>
            <person name="Groudine M."/>
            <person name="Kutateladze T.G."/>
        </authorList>
    </citation>
    <scope>X-RAY CRYSTALLOGRAPHY (1.48 ANGSTROMS) OF 117-181 IN COMPLEX WITH ZINC</scope>
    <scope>FUNCTION</scope>
    <scope>SUBCELLULAR LOCATION</scope>
    <scope>DOMAIN</scope>
    <scope>MUTAGENESIS OF PHE-125; ASP-128; TYR-131 AND TRP-141</scope>
</reference>
<reference key="19">
    <citation type="journal article" date="2016" name="PLoS ONE">
        <title>The human mixed lineage leukemia 5 (MLL5), a sequentially and structurally divergent SET domain-containing protein with no intrinsic catalytic activity.</title>
        <authorList>
            <person name="Mas-Y-Mas S."/>
            <person name="Barbon M."/>
            <person name="Teyssier C."/>
            <person name="Demene H."/>
            <person name="Carvalho J.E."/>
            <person name="Bird L.E."/>
            <person name="Lebedev A."/>
            <person name="Fattori J."/>
            <person name="Schubert M."/>
            <person name="Dumas C."/>
            <person name="Bourguet W."/>
            <person name="le Maire A."/>
        </authorList>
    </citation>
    <scope>X-RAY CRYSTALLOGRAPHY (2.09 ANGSTROMS) OF 323-458</scope>
    <scope>LACK OF CATALYTIC ACTIVITY</scope>
</reference>
<reference key="20">
    <citation type="journal article" date="2019" name="Am. J. Hum. Genet.">
        <title>Heterozygous variants in KMT2E cause a spectrum of neurodevelopmental disorders and epilepsy.</title>
        <authorList>
            <consortium name="Deciphering Developmental Disorders (DDD) Study"/>
            <person name="O'Donnell-Luria A.H."/>
            <person name="Pais L.S."/>
            <person name="Faundes V."/>
            <person name="Wood J.C."/>
            <person name="Sveden A."/>
            <person name="Luria V."/>
            <person name="Abou Jamra R."/>
            <person name="Accogli A."/>
            <person name="Amburgey K."/>
            <person name="Anderlid B.M."/>
            <person name="Azzarello-Burri S."/>
            <person name="Basinger A.A."/>
            <person name="Bianchini C."/>
            <person name="Bird L.M."/>
            <person name="Buchert R."/>
            <person name="Carre W."/>
            <person name="Ceulemans S."/>
            <person name="Charles P."/>
            <person name="Cox H."/>
            <person name="Culliton L."/>
            <person name="Curro A."/>
            <person name="Demurger F."/>
            <person name="Dowling J.J."/>
            <person name="Duban-Bedu B."/>
            <person name="Dubourg C."/>
            <person name="Eiset S.E."/>
            <person name="Escobar L.F."/>
            <person name="Ferrarini A."/>
            <person name="Haack T.B."/>
            <person name="Hashim M."/>
            <person name="Heide S."/>
            <person name="Helbig K.L."/>
            <person name="Helbig I."/>
            <person name="Heredia R."/>
            <person name="Heron D."/>
            <person name="Isidor B."/>
            <person name="Jonasson A.R."/>
            <person name="Joset P."/>
            <person name="Keren B."/>
            <person name="Kok F."/>
            <person name="Kroes H.Y."/>
            <person name="Lavillaureix A."/>
            <person name="Lu X."/>
            <person name="Maas S.M."/>
            <person name="Maegawa G.H.B."/>
            <person name="Marcelis C.L.M."/>
            <person name="Mark P.R."/>
            <person name="Masruha M.R."/>
            <person name="McLaughlin H.M."/>
            <person name="McWalter K."/>
            <person name="Melchinger E.U."/>
            <person name="Mercimek-Andrews S."/>
            <person name="Nava C."/>
            <person name="Pendziwiat M."/>
            <person name="Person R."/>
            <person name="Ramelli G.P."/>
            <person name="Ramos L.L.P."/>
            <person name="Rauch A."/>
            <person name="Reavey C."/>
            <person name="Renieri A."/>
            <person name="Riess A."/>
            <person name="Sanchez-Valle A."/>
            <person name="Sattar S."/>
            <person name="Saunders C."/>
            <person name="Schwarz N."/>
            <person name="Smol T."/>
            <person name="Srour M."/>
            <person name="Steindl K."/>
            <person name="Syrbe S."/>
            <person name="Taylor J.C."/>
            <person name="Telegrafi A."/>
            <person name="Thiffault I."/>
            <person name="Trauner D.A."/>
            <person name="van der Linden H. Jr."/>
            <person name="van Koningsbruggen S."/>
            <person name="Villard L."/>
            <person name="Vogel I."/>
            <person name="Vogt J."/>
            <person name="Weber Y.G."/>
            <person name="Wentzensen I.M."/>
            <person name="Widjaja E."/>
            <person name="Zak J."/>
            <person name="Baxter S."/>
            <person name="Banka S."/>
            <person name="Rodan L.H."/>
        </authorList>
    </citation>
    <scope>INVOLVEMENT IN ODLURO</scope>
    <scope>VARIANTS ODLURO ILE-140; 151-ARG--HIS-1858 DEL; HIS-284; 754-SER--HIS-1858 DEL; 818-ARG--HIS-1858 DEL; 874-ARG--HIS-1858 DEL; VAL-907; 1024-GLN--HIS-1858 DEL; 1185-SER--HIS-1858 DEL; 1224-TYR--HIS-1858 DEL AND SER-1376</scope>
    <scope>VARIANT LEU-1376</scope>
</reference>
<accession>Q8IZD2</accession>
<accession>B6ZDE4</accession>
<accession>B6ZDM3</accession>
<accession>M4K8J3</accession>
<accession>Q6P5Y2</accession>
<accession>Q6PKG4</accession>
<accession>Q6T316</accession>
<accession>Q86TI3</accession>
<accession>Q86W12</accession>
<accession>Q86WG0</accession>
<accession>Q86WL2</accession>
<accession>Q8IV78</accession>
<accession>Q8IWR5</accession>
<accession>Q8NFF8</accession>
<accession>Q9NWE7</accession>
<keyword id="KW-0002">3D-structure</keyword>
<keyword id="KW-0025">Alternative splicing</keyword>
<keyword id="KW-0131">Cell cycle</keyword>
<keyword id="KW-1003">Cell membrane</keyword>
<keyword id="KW-0156">Chromatin regulator</keyword>
<keyword id="KW-0158">Chromosome</keyword>
<keyword id="KW-0175">Coiled coil</keyword>
<keyword id="KW-0963">Cytoplasm</keyword>
<keyword id="KW-0206">Cytoskeleton</keyword>
<keyword id="KW-0225">Disease variant</keyword>
<keyword id="KW-0325">Glycoprotein</keyword>
<keyword id="KW-0338">Growth arrest</keyword>
<keyword id="KW-0991">Intellectual disability</keyword>
<keyword id="KW-0472">Membrane</keyword>
<keyword id="KW-0479">Metal-binding</keyword>
<keyword id="KW-0539">Nucleus</keyword>
<keyword id="KW-0597">Phosphoprotein</keyword>
<keyword id="KW-1267">Proteomics identification</keyword>
<keyword id="KW-1185">Reference proteome</keyword>
<keyword id="KW-0804">Transcription</keyword>
<keyword id="KW-0805">Transcription regulation</keyword>
<keyword id="KW-0832">Ubl conjugation</keyword>
<keyword id="KW-0862">Zinc</keyword>
<keyword id="KW-0863">Zinc-finger</keyword>
<gene>
    <name type="primary">KMT2E</name>
    <name type="synonym">MLL5</name>
</gene>
<dbReference type="EMBL" id="AF519459">
    <property type="protein sequence ID" value="AAM74947.1"/>
    <property type="molecule type" value="mRNA"/>
</dbReference>
<dbReference type="EMBL" id="JQ809698">
    <property type="protein sequence ID" value="AGE34449.1"/>
    <property type="molecule type" value="mRNA"/>
</dbReference>
<dbReference type="EMBL" id="AY147037">
    <property type="protein sequence ID" value="AAN17675.1"/>
    <property type="molecule type" value="mRNA"/>
</dbReference>
<dbReference type="EMBL" id="AY157990">
    <property type="protein sequence ID" value="AAN76325.1"/>
    <property type="molecule type" value="mRNA"/>
</dbReference>
<dbReference type="EMBL" id="AY195568">
    <property type="protein sequence ID" value="AAO47009.1"/>
    <property type="molecule type" value="mRNA"/>
</dbReference>
<dbReference type="EMBL" id="AY195569">
    <property type="protein sequence ID" value="AAO47010.1"/>
    <property type="molecule type" value="mRNA"/>
</dbReference>
<dbReference type="EMBL" id="AY222296">
    <property type="protein sequence ID" value="AAO64395.1"/>
    <property type="molecule type" value="mRNA"/>
</dbReference>
<dbReference type="EMBL" id="AY234382">
    <property type="protein sequence ID" value="AAO89072.1"/>
    <property type="molecule type" value="mRNA"/>
</dbReference>
<dbReference type="EMBL" id="AY438698">
    <property type="protein sequence ID" value="AAR13893.1"/>
    <property type="molecule type" value="mRNA"/>
</dbReference>
<dbReference type="EMBL" id="AC005065">
    <property type="status" value="NOT_ANNOTATED_CDS"/>
    <property type="molecule type" value="Genomic_DNA"/>
</dbReference>
<dbReference type="EMBL" id="AC005070">
    <property type="status" value="NOT_ANNOTATED_CDS"/>
    <property type="molecule type" value="Genomic_DNA"/>
</dbReference>
<dbReference type="EMBL" id="AC007384">
    <property type="status" value="NOT_ANNOTATED_CDS"/>
    <property type="molecule type" value="Genomic_DNA"/>
</dbReference>
<dbReference type="EMBL" id="CH471070">
    <property type="protein sequence ID" value="EAW83356.1"/>
    <property type="molecule type" value="Genomic_DNA"/>
</dbReference>
<dbReference type="EMBL" id="BC001296">
    <property type="protein sequence ID" value="AAH01296.1"/>
    <property type="status" value="ALT_SEQ"/>
    <property type="molecule type" value="mRNA"/>
</dbReference>
<dbReference type="EMBL" id="BC040004">
    <property type="protein sequence ID" value="AAH40004.1"/>
    <property type="status" value="ALT_SEQ"/>
    <property type="molecule type" value="mRNA"/>
</dbReference>
<dbReference type="EMBL" id="BC053906">
    <property type="protein sequence ID" value="AAH53906.1"/>
    <property type="status" value="ALT_SEQ"/>
    <property type="molecule type" value="mRNA"/>
</dbReference>
<dbReference type="EMBL" id="BC062583">
    <property type="protein sequence ID" value="AAH62583.1"/>
    <property type="molecule type" value="mRNA"/>
</dbReference>
<dbReference type="EMBL" id="BC142987">
    <property type="protein sequence ID" value="AAI42988.1"/>
    <property type="status" value="ALT_SEQ"/>
    <property type="molecule type" value="mRNA"/>
</dbReference>
<dbReference type="EMBL" id="AK000940">
    <property type="status" value="NOT_ANNOTATED_CDS"/>
    <property type="molecule type" value="mRNA"/>
</dbReference>
<dbReference type="CCDS" id="CCDS34723.1">
    <molecule id="Q8IZD2-1"/>
</dbReference>
<dbReference type="CCDS" id="CCDS94170.1">
    <molecule id="Q8IZD2-7"/>
</dbReference>
<dbReference type="RefSeq" id="NP_001397837.1">
    <molecule id="Q8IZD2-7"/>
    <property type="nucleotide sequence ID" value="NM_001410908.1"/>
</dbReference>
<dbReference type="RefSeq" id="NP_061152.3">
    <molecule id="Q8IZD2-1"/>
    <property type="nucleotide sequence ID" value="NM_018682.3"/>
</dbReference>
<dbReference type="RefSeq" id="NP_891847.1">
    <molecule id="Q8IZD2-1"/>
    <property type="nucleotide sequence ID" value="NM_182931.3"/>
</dbReference>
<dbReference type="RefSeq" id="XP_005250550.1">
    <molecule id="Q8IZD2-1"/>
    <property type="nucleotide sequence ID" value="XM_005250493.2"/>
</dbReference>
<dbReference type="RefSeq" id="XP_011514702.1">
    <molecule id="Q8IZD2-1"/>
    <property type="nucleotide sequence ID" value="XM_011516400.3"/>
</dbReference>
<dbReference type="RefSeq" id="XP_047276569.1">
    <molecule id="Q8IZD2-8"/>
    <property type="nucleotide sequence ID" value="XM_047420613.1"/>
</dbReference>
<dbReference type="RefSeq" id="XP_054214620.1">
    <molecule id="Q8IZD2-1"/>
    <property type="nucleotide sequence ID" value="XM_054358645.1"/>
</dbReference>
<dbReference type="RefSeq" id="XP_054214621.1">
    <molecule id="Q8IZD2-1"/>
    <property type="nucleotide sequence ID" value="XM_054358646.1"/>
</dbReference>
<dbReference type="RefSeq" id="XP_054214623.1">
    <molecule id="Q8IZD2-8"/>
    <property type="nucleotide sequence ID" value="XM_054358648.1"/>
</dbReference>
<dbReference type="PDB" id="2LV9">
    <property type="method" value="NMR"/>
    <property type="chains" value="A=109-188"/>
</dbReference>
<dbReference type="PDB" id="4L58">
    <property type="method" value="X-ray"/>
    <property type="resolution" value="1.48 A"/>
    <property type="chains" value="A=117-181"/>
</dbReference>
<dbReference type="PDB" id="5HT6">
    <property type="method" value="X-ray"/>
    <property type="resolution" value="2.09 A"/>
    <property type="chains" value="A/B=323-458"/>
</dbReference>
<dbReference type="PDBsum" id="2LV9"/>
<dbReference type="PDBsum" id="4L58"/>
<dbReference type="PDBsum" id="5HT6"/>
<dbReference type="BMRB" id="Q8IZD2"/>
<dbReference type="SMR" id="Q8IZD2"/>
<dbReference type="BioGRID" id="120990">
    <property type="interactions" value="48"/>
</dbReference>
<dbReference type="CORUM" id="Q8IZD2"/>
<dbReference type="FunCoup" id="Q8IZD2">
    <property type="interactions" value="3146"/>
</dbReference>
<dbReference type="IntAct" id="Q8IZD2">
    <property type="interactions" value="14"/>
</dbReference>
<dbReference type="STRING" id="9606.ENSP00000312379"/>
<dbReference type="ChEMBL" id="CHEMBL4523393"/>
<dbReference type="GlyCosmos" id="Q8IZD2">
    <property type="glycosylation" value="12 sites, 1 glycan"/>
</dbReference>
<dbReference type="GlyGen" id="Q8IZD2">
    <property type="glycosylation" value="25 sites, 1 O-linked glycan (14 sites)"/>
</dbReference>
<dbReference type="iPTMnet" id="Q8IZD2"/>
<dbReference type="PhosphoSitePlus" id="Q8IZD2"/>
<dbReference type="BioMuta" id="KMT2E"/>
<dbReference type="DMDM" id="74723669"/>
<dbReference type="jPOST" id="Q8IZD2"/>
<dbReference type="MassIVE" id="Q8IZD2"/>
<dbReference type="PaxDb" id="9606-ENSP00000312379"/>
<dbReference type="PeptideAtlas" id="Q8IZD2"/>
<dbReference type="ProteomicsDB" id="71322">
    <molecule id="Q8IZD2-1"/>
</dbReference>
<dbReference type="ProteomicsDB" id="71323">
    <molecule id="Q8IZD2-2"/>
</dbReference>
<dbReference type="ProteomicsDB" id="71324">
    <molecule id="Q8IZD2-3"/>
</dbReference>
<dbReference type="ProteomicsDB" id="71325">
    <molecule id="Q8IZD2-4"/>
</dbReference>
<dbReference type="ProteomicsDB" id="71326">
    <molecule id="Q8IZD2-5"/>
</dbReference>
<dbReference type="ProteomicsDB" id="71327">
    <molecule id="Q8IZD2-6"/>
</dbReference>
<dbReference type="ProteomicsDB" id="71328">
    <molecule id="Q8IZD2-7"/>
</dbReference>
<dbReference type="Pumba" id="Q8IZD2"/>
<dbReference type="Antibodypedia" id="31243">
    <property type="antibodies" value="198 antibodies from 32 providers"/>
</dbReference>
<dbReference type="DNASU" id="55904"/>
<dbReference type="Ensembl" id="ENST00000311117.8">
    <molecule id="Q8IZD2-1"/>
    <property type="protein sequence ID" value="ENSP00000312379.3"/>
    <property type="gene ID" value="ENSG00000005483.23"/>
</dbReference>
<dbReference type="Ensembl" id="ENST00000334884.9">
    <molecule id="Q8IZD2-4"/>
    <property type="protein sequence ID" value="ENSP00000335398.5"/>
    <property type="gene ID" value="ENSG00000005483.23"/>
</dbReference>
<dbReference type="Ensembl" id="ENST00000473063.2">
    <molecule id="Q8IZD2-7"/>
    <property type="protein sequence ID" value="ENSP00000417156.2"/>
    <property type="gene ID" value="ENSG00000005483.23"/>
</dbReference>
<dbReference type="Ensembl" id="ENST00000474203.6">
    <molecule id="Q8IZD2-3"/>
    <property type="protein sequence ID" value="ENSP00000420206.2"/>
    <property type="gene ID" value="ENSG00000005483.23"/>
</dbReference>
<dbReference type="Ensembl" id="ENST00000476671.5">
    <molecule id="Q8IZD2-3"/>
    <property type="protein sequence ID" value="ENSP00000417888.1"/>
    <property type="gene ID" value="ENSG00000005483.23"/>
</dbReference>
<dbReference type="Ensembl" id="ENST00000478079.2">
    <molecule id="Q8IZD2-8"/>
    <property type="protein sequence ID" value="ENSP00000419525.2"/>
    <property type="gene ID" value="ENSG00000005483.23"/>
</dbReference>
<dbReference type="GeneID" id="55904"/>
<dbReference type="KEGG" id="hsa:55904"/>
<dbReference type="MANE-Select" id="ENST00000311117.8">
    <property type="protein sequence ID" value="ENSP00000312379.3"/>
    <property type="RefSeq nucleotide sequence ID" value="NM_182931.3"/>
    <property type="RefSeq protein sequence ID" value="NP_891847.1"/>
</dbReference>
<dbReference type="UCSC" id="uc003vcl.5">
    <molecule id="Q8IZD2-1"/>
    <property type="organism name" value="human"/>
</dbReference>
<dbReference type="AGR" id="HGNC:18541"/>
<dbReference type="CTD" id="55904"/>
<dbReference type="DisGeNET" id="55904"/>
<dbReference type="GeneCards" id="KMT2E"/>
<dbReference type="GeneReviews" id="KMT2E"/>
<dbReference type="HGNC" id="HGNC:18541">
    <property type="gene designation" value="KMT2E"/>
</dbReference>
<dbReference type="HPA" id="ENSG00000005483">
    <property type="expression patterns" value="Low tissue specificity"/>
</dbReference>
<dbReference type="MalaCards" id="KMT2E"/>
<dbReference type="MIM" id="608444">
    <property type="type" value="gene"/>
</dbReference>
<dbReference type="MIM" id="618512">
    <property type="type" value="phenotype"/>
</dbReference>
<dbReference type="neXtProt" id="NX_Q8IZD2"/>
<dbReference type="OpenTargets" id="ENSG00000005483"/>
<dbReference type="Orphanet" id="528084">
    <property type="disease" value="Non-specific syndromic intellectual disability"/>
</dbReference>
<dbReference type="PharmGKB" id="PA38568"/>
<dbReference type="VEuPathDB" id="HostDB:ENSG00000005483"/>
<dbReference type="eggNOG" id="KOG1844">
    <property type="taxonomic scope" value="Eukaryota"/>
</dbReference>
<dbReference type="GeneTree" id="ENSGT00940000157862"/>
<dbReference type="HOGENOM" id="CLU_002373_2_1_1"/>
<dbReference type="InParanoid" id="Q8IZD2"/>
<dbReference type="OMA" id="GYFFKPY"/>
<dbReference type="OrthoDB" id="1928087at2759"/>
<dbReference type="PAN-GO" id="Q8IZD2">
    <property type="GO annotations" value="5 GO annotations based on evolutionary models"/>
</dbReference>
<dbReference type="PhylomeDB" id="Q8IZD2"/>
<dbReference type="TreeFam" id="TF106417"/>
<dbReference type="BioCyc" id="MetaCyc:HS00145-MONOMER"/>
<dbReference type="PathwayCommons" id="Q8IZD2"/>
<dbReference type="SignaLink" id="Q8IZD2"/>
<dbReference type="SIGNOR" id="Q8IZD2"/>
<dbReference type="BioGRID-ORCS" id="55904">
    <property type="hits" value="26 hits in 1140 CRISPR screens"/>
</dbReference>
<dbReference type="CD-CODE" id="804901D1">
    <property type="entry name" value="Nuclear speckle"/>
</dbReference>
<dbReference type="ChiTaRS" id="KMT2E">
    <property type="organism name" value="human"/>
</dbReference>
<dbReference type="EvolutionaryTrace" id="Q8IZD2"/>
<dbReference type="GenomeRNAi" id="55904"/>
<dbReference type="Pharos" id="Q8IZD2">
    <property type="development level" value="Tbio"/>
</dbReference>
<dbReference type="PRO" id="PR:Q8IZD2"/>
<dbReference type="Proteomes" id="UP000005640">
    <property type="component" value="Chromosome 7"/>
</dbReference>
<dbReference type="RNAct" id="Q8IZD2">
    <property type="molecule type" value="protein"/>
</dbReference>
<dbReference type="Bgee" id="ENSG00000005483">
    <property type="expression patterns" value="Expressed in tendon of biceps brachii and 199 other cell types or tissues"/>
</dbReference>
<dbReference type="ExpressionAtlas" id="Q8IZD2">
    <property type="expression patterns" value="baseline and differential"/>
</dbReference>
<dbReference type="GO" id="GO:0005813">
    <property type="term" value="C:centrosome"/>
    <property type="evidence" value="ECO:0007669"/>
    <property type="project" value="UniProtKB-SubCell"/>
</dbReference>
<dbReference type="GO" id="GO:0000785">
    <property type="term" value="C:chromatin"/>
    <property type="evidence" value="ECO:0000314"/>
    <property type="project" value="UniProtKB"/>
</dbReference>
<dbReference type="GO" id="GO:0005737">
    <property type="term" value="C:cytoplasm"/>
    <property type="evidence" value="ECO:0007669"/>
    <property type="project" value="UniProtKB-SubCell"/>
</dbReference>
<dbReference type="GO" id="GO:0000791">
    <property type="term" value="C:euchromatin"/>
    <property type="evidence" value="ECO:0000314"/>
    <property type="project" value="UniProtKB"/>
</dbReference>
<dbReference type="GO" id="GO:0016604">
    <property type="term" value="C:nuclear body"/>
    <property type="evidence" value="ECO:0000314"/>
    <property type="project" value="HPA"/>
</dbReference>
<dbReference type="GO" id="GO:0016607">
    <property type="term" value="C:nuclear speck"/>
    <property type="evidence" value="ECO:0007669"/>
    <property type="project" value="UniProtKB-SubCell"/>
</dbReference>
<dbReference type="GO" id="GO:0005654">
    <property type="term" value="C:nucleoplasm"/>
    <property type="evidence" value="ECO:0000314"/>
    <property type="project" value="HPA"/>
</dbReference>
<dbReference type="GO" id="GO:0005634">
    <property type="term" value="C:nucleus"/>
    <property type="evidence" value="ECO:0000314"/>
    <property type="project" value="UniProtKB"/>
</dbReference>
<dbReference type="GO" id="GO:0005886">
    <property type="term" value="C:plasma membrane"/>
    <property type="evidence" value="ECO:0007669"/>
    <property type="project" value="UniProtKB-SubCell"/>
</dbReference>
<dbReference type="GO" id="GO:0032991">
    <property type="term" value="C:protein-containing complex"/>
    <property type="evidence" value="ECO:0000314"/>
    <property type="project" value="UniProtKB"/>
</dbReference>
<dbReference type="GO" id="GO:0070210">
    <property type="term" value="C:Rpd3L-Expanded complex"/>
    <property type="evidence" value="ECO:0000318"/>
    <property type="project" value="GO_Central"/>
</dbReference>
<dbReference type="GO" id="GO:0034967">
    <property type="term" value="C:Set3 complex"/>
    <property type="evidence" value="ECO:0000318"/>
    <property type="project" value="GO_Central"/>
</dbReference>
<dbReference type="GO" id="GO:0019899">
    <property type="term" value="F:enzyme binding"/>
    <property type="evidence" value="ECO:0000353"/>
    <property type="project" value="UniProtKB"/>
</dbReference>
<dbReference type="GO" id="GO:0140002">
    <property type="term" value="F:histone H3K4me3 reader activity"/>
    <property type="evidence" value="ECO:0000314"/>
    <property type="project" value="UniProtKB"/>
</dbReference>
<dbReference type="GO" id="GO:0035064">
    <property type="term" value="F:methylated histone binding"/>
    <property type="evidence" value="ECO:0000318"/>
    <property type="project" value="GO_Central"/>
</dbReference>
<dbReference type="GO" id="GO:0003713">
    <property type="term" value="F:transcription coactivator activity"/>
    <property type="evidence" value="ECO:0000314"/>
    <property type="project" value="UniProtKB"/>
</dbReference>
<dbReference type="GO" id="GO:0008270">
    <property type="term" value="F:zinc ion binding"/>
    <property type="evidence" value="ECO:0007669"/>
    <property type="project" value="UniProtKB-KW"/>
</dbReference>
<dbReference type="GO" id="GO:0040029">
    <property type="term" value="P:epigenetic regulation of gene expression"/>
    <property type="evidence" value="ECO:0000250"/>
    <property type="project" value="UniProtKB"/>
</dbReference>
<dbReference type="GO" id="GO:0030218">
    <property type="term" value="P:erythrocyte differentiation"/>
    <property type="evidence" value="ECO:0000250"/>
    <property type="project" value="UniProtKB"/>
</dbReference>
<dbReference type="GO" id="GO:0042119">
    <property type="term" value="P:neutrophil activation"/>
    <property type="evidence" value="ECO:0000250"/>
    <property type="project" value="UniProtKB"/>
</dbReference>
<dbReference type="GO" id="GO:0002446">
    <property type="term" value="P:neutrophil mediated immunity"/>
    <property type="evidence" value="ECO:0000250"/>
    <property type="project" value="UniProtKB"/>
</dbReference>
<dbReference type="GO" id="GO:0045893">
    <property type="term" value="P:positive regulation of DNA-templated transcription"/>
    <property type="evidence" value="ECO:0000315"/>
    <property type="project" value="UniProtKB"/>
</dbReference>
<dbReference type="GO" id="GO:1900087">
    <property type="term" value="P:positive regulation of G1/S transition of mitotic cell cycle"/>
    <property type="evidence" value="ECO:0000315"/>
    <property type="project" value="UniProtKB"/>
</dbReference>
<dbReference type="GO" id="GO:0006355">
    <property type="term" value="P:regulation of DNA-templated transcription"/>
    <property type="evidence" value="ECO:0000318"/>
    <property type="project" value="GO_Central"/>
</dbReference>
<dbReference type="CDD" id="cd15550">
    <property type="entry name" value="PHD_MLL5"/>
    <property type="match status" value="1"/>
</dbReference>
<dbReference type="CDD" id="cd19182">
    <property type="entry name" value="SET_KMT2E"/>
    <property type="match status" value="1"/>
</dbReference>
<dbReference type="DisProt" id="DP02393"/>
<dbReference type="FunFam" id="3.30.40.10:FF:000150">
    <property type="entry name" value="Inactive histone-lysine N-methyltransferase 2E"/>
    <property type="match status" value="1"/>
</dbReference>
<dbReference type="FunFam" id="2.170.270.10:FF:000009">
    <property type="entry name" value="SET domain-containing protein 5"/>
    <property type="match status" value="1"/>
</dbReference>
<dbReference type="Gene3D" id="2.170.270.10">
    <property type="entry name" value="SET domain"/>
    <property type="match status" value="1"/>
</dbReference>
<dbReference type="Gene3D" id="3.30.40.10">
    <property type="entry name" value="Zinc/RING finger domain, C3HC4 (zinc finger)"/>
    <property type="match status" value="1"/>
</dbReference>
<dbReference type="IDEAL" id="IID00485"/>
<dbReference type="InterPro" id="IPR044434">
    <property type="entry name" value="KMT2E_SET"/>
</dbReference>
<dbReference type="InterPro" id="IPR001214">
    <property type="entry name" value="SET_dom"/>
</dbReference>
<dbReference type="InterPro" id="IPR046341">
    <property type="entry name" value="SET_dom_sf"/>
</dbReference>
<dbReference type="InterPro" id="IPR019786">
    <property type="entry name" value="Zinc_finger_PHD-type_CS"/>
</dbReference>
<dbReference type="InterPro" id="IPR011011">
    <property type="entry name" value="Znf_FYVE_PHD"/>
</dbReference>
<dbReference type="InterPro" id="IPR001965">
    <property type="entry name" value="Znf_PHD"/>
</dbReference>
<dbReference type="InterPro" id="IPR019787">
    <property type="entry name" value="Znf_PHD-finger"/>
</dbReference>
<dbReference type="InterPro" id="IPR013083">
    <property type="entry name" value="Znf_RING/FYVE/PHD"/>
</dbReference>
<dbReference type="PANTHER" id="PTHR46462:SF2">
    <property type="entry name" value="INACTIVE HISTONE-LYSINE N-METHYLTRANSFERASE 2E"/>
    <property type="match status" value="1"/>
</dbReference>
<dbReference type="PANTHER" id="PTHR46462">
    <property type="entry name" value="UPSET, ISOFORM A"/>
    <property type="match status" value="1"/>
</dbReference>
<dbReference type="Pfam" id="PF20826">
    <property type="entry name" value="PHD_5"/>
    <property type="match status" value="1"/>
</dbReference>
<dbReference type="Pfam" id="PF00856">
    <property type="entry name" value="SET"/>
    <property type="match status" value="1"/>
</dbReference>
<dbReference type="SMART" id="SM00249">
    <property type="entry name" value="PHD"/>
    <property type="match status" value="1"/>
</dbReference>
<dbReference type="SMART" id="SM00317">
    <property type="entry name" value="SET"/>
    <property type="match status" value="1"/>
</dbReference>
<dbReference type="SUPFAM" id="SSF57903">
    <property type="entry name" value="FYVE/PHD zinc finger"/>
    <property type="match status" value="1"/>
</dbReference>
<dbReference type="SUPFAM" id="SSF82199">
    <property type="entry name" value="SET domain"/>
    <property type="match status" value="1"/>
</dbReference>
<dbReference type="PROSITE" id="PS50280">
    <property type="entry name" value="SET"/>
    <property type="match status" value="1"/>
</dbReference>
<dbReference type="PROSITE" id="PS01359">
    <property type="entry name" value="ZF_PHD_1"/>
    <property type="match status" value="1"/>
</dbReference>
<dbReference type="PROSITE" id="PS50016">
    <property type="entry name" value="ZF_PHD_2"/>
    <property type="match status" value="1"/>
</dbReference>
<evidence type="ECO:0000250" key="1">
    <source>
        <dbReference type="UniProtKB" id="Q3UG20"/>
    </source>
</evidence>
<evidence type="ECO:0000255" key="2"/>
<evidence type="ECO:0000255" key="3">
    <source>
        <dbReference type="PROSITE-ProRule" id="PRU00146"/>
    </source>
</evidence>
<evidence type="ECO:0000255" key="4">
    <source>
        <dbReference type="PROSITE-ProRule" id="PRU00190"/>
    </source>
</evidence>
<evidence type="ECO:0000256" key="5">
    <source>
        <dbReference type="SAM" id="MobiDB-lite"/>
    </source>
</evidence>
<evidence type="ECO:0000269" key="6">
    <source>
    </source>
</evidence>
<evidence type="ECO:0000269" key="7">
    <source>
    </source>
</evidence>
<evidence type="ECO:0000269" key="8">
    <source>
    </source>
</evidence>
<evidence type="ECO:0000269" key="9">
    <source>
    </source>
</evidence>
<evidence type="ECO:0000269" key="10">
    <source>
    </source>
</evidence>
<evidence type="ECO:0000269" key="11">
    <source>
    </source>
</evidence>
<evidence type="ECO:0000269" key="12">
    <source>
    </source>
</evidence>
<evidence type="ECO:0000269" key="13">
    <source>
    </source>
</evidence>
<evidence type="ECO:0000269" key="14">
    <source>
    </source>
</evidence>
<evidence type="ECO:0000269" key="15">
    <source>
    </source>
</evidence>
<evidence type="ECO:0000269" key="16">
    <source>
    </source>
</evidence>
<evidence type="ECO:0000269" key="17">
    <source>
    </source>
</evidence>
<evidence type="ECO:0000269" key="18">
    <source>
    </source>
</evidence>
<evidence type="ECO:0000269" key="19">
    <source>
    </source>
</evidence>
<evidence type="ECO:0000269" key="20">
    <source ref="3"/>
</evidence>
<evidence type="ECO:0000303" key="21">
    <source>
    </source>
</evidence>
<evidence type="ECO:0000303" key="22">
    <source>
    </source>
</evidence>
<evidence type="ECO:0000303" key="23">
    <source ref="3"/>
</evidence>
<evidence type="ECO:0000305" key="24"/>
<evidence type="ECO:0000312" key="25">
    <source>
        <dbReference type="EMBL" id="AAH01296.1"/>
    </source>
</evidence>
<evidence type="ECO:0000312" key="26">
    <source>
        <dbReference type="EMBL" id="AAH40004.1"/>
    </source>
</evidence>
<evidence type="ECO:0000312" key="27">
    <source>
        <dbReference type="EMBL" id="AAH53906.1"/>
    </source>
</evidence>
<evidence type="ECO:0000312" key="28">
    <source>
        <dbReference type="EMBL" id="AAH62583.1"/>
    </source>
</evidence>
<evidence type="ECO:0000312" key="29">
    <source>
        <dbReference type="EMBL" id="AAM74947.1"/>
    </source>
</evidence>
<evidence type="ECO:0000312" key="30">
    <source>
        <dbReference type="EMBL" id="AAN17675.1"/>
    </source>
</evidence>
<evidence type="ECO:0000312" key="31">
    <source>
        <dbReference type="EMBL" id="AAO47010.1"/>
    </source>
</evidence>
<evidence type="ECO:0000312" key="32">
    <source>
        <dbReference type="EMBL" id="AAO89072.1"/>
    </source>
</evidence>
<evidence type="ECO:0007744" key="33">
    <source>
        <dbReference type="PDB" id="2LV9"/>
    </source>
</evidence>
<evidence type="ECO:0007744" key="34">
    <source>
        <dbReference type="PDB" id="4L58"/>
    </source>
</evidence>
<evidence type="ECO:0007744" key="35">
    <source>
    </source>
</evidence>
<evidence type="ECO:0007829" key="36">
    <source>
        <dbReference type="PDB" id="2LV9"/>
    </source>
</evidence>
<evidence type="ECO:0007829" key="37">
    <source>
        <dbReference type="PDB" id="4L58"/>
    </source>
</evidence>
<evidence type="ECO:0007829" key="38">
    <source>
        <dbReference type="PDB" id="5HT6"/>
    </source>
</evidence>
<sequence>MSIVIPLGVDTAETSYLEMAAGSEPESVEASPVVVEKSNSYPHQLYTSSSHHSHSYIGLPYADHNYGARPPPTPPASPPPSVLISKNEVGIFTTPNFDETSSATTISTSEDGSYGTDVTRCICGFTHDDGYMICCDKCSVWQHIDCMGIDRQHIPDTYLCERCQPRNLDKERAVLLQRRKRENMSDGDTSATESGDEVPVELYTAFQHTPTSITLTASRVSKVNDKRRKKSGEKEQHISKCKKAFREGSRKSSRVKGSAPEIDPSSDGSNFGWETKIKAWMDRYEEANNNQYSEGVQREAQRIALRLGNGNDKKEMNKSDLNTNNLLFKPPVESHIQKNKKILKSAKDLPPDALIIEYRGKFMLREQFEANGYFFKRPYPFVLFYSKFHGLEMCVDARTFGNEARFIRRSCTPNAEVRHEIQDGTIHLYIYSIHSIPKGTEITIAFDFDYGNCKYKVDCACLKENPECPVLKRSSESMENINSGYETRRKKGKKDKDISKEKDTQNQNITLDCEGTTNKMKSPETKQRKLSPLRLSVSNNQEPDFIDDIEEKTPISNEVEMESEEQIAERKRKMTREERKMEAILQAFARLEKREKRREQALERISTAKTEVKTECKDTQIVSDAEVIQEQAKEENASKPTPAKVNRTKQRKSFSRSRTHIGQQRRRHRTVSMCSDIQPSSPDIEVTSQQNDIENTVLTIEPETETALAEIITETEVPALNKCPTKYPKTKKHLVNEWLSEKNEKTGKPSDGLSERPLRITTDPEVLATQLNSLPGLTYSPHVYSTPKHYIRFTSPFLSEKRRRKEPTENISGSCKKRWLKQALEEENSAILHRFNSPCQERSRSPAVNGENKSPLLLNDSCSLPDLTTPLKKRRFYQLLDSVYSETSTPTPSPYATPTHTDITPMDPSFATPPRIKSDDETCRNGYKPIYSPVTPVTPGTPGNTMHFENISSPESSPEIKRRTYSQEGYDRSSTMLTLGPFRNSNLTELGLQEIKTIGYTSPRSRTEVNRQCPGEKEPVSDLQLGLDAVEPTALHKTLETPAHDRAEPNSQLDSTHSGRGTMYSSWVKSPDRTGVNFSVNSNLRDLTPSHQLEVGGGFRISESKCLMQDDTRGMFMETTVFCTSEDGLVSGFGRTVNDNLIDGNCTPQNPPQKKKVSLLEYRKRQREARKSGSKTENFPLISVSPHASGSLSNNGDGCASSNDNGEQVDHTASLPLPTPATVYNATSEETSNNCPVKDATASEKNEPEVQWTASTSVEQVRERSYQRALLLSDHRKDKDSGGESPCVSCSPSHVQSSPSSHSNHIPQLQAKGPVPSFSELMEDPDPENPEPTTTNECPSPDTSQNTCKSPPKMSKPGSPGSVIPAQAHGKIFTKPDPQWDSTVSASEAENGVHLKTELQQKQLSNNNQALSKNHPPQTHVRNSSEQLSQKLPSVPTKLHCPPSPHLENPPKSSTPHTPVQHGYLSPKPPSQQLGSPYRPHHSQSPQVGTPQREPQRNFYPAAQNLPANTQQATSGTLFTQTPSGQSSATYSQFNQQSLNSTAPPPPPPPPPSSSYYQNQQPSANFQNYNQLKGSLSQQTVFTSGPNQALPGTTSQQTVPGHHVTPGHFLPSQNPTIHHQTAAAVVPPPPPPPPAPGPHLVQQPNSHQQHSVAHVVGPVHAVTPGSHIHSQTAGHHLPPPPPPPGPAPHHHPPPHPSTGLQGLQAQHQHVVNSAPPPPPPPPPSSVLASGHHTTSAQALHHPPHQGPPLFPSSAHPTVPPYPSQATHHTTLGPGPQHQPSGTGPHCPLPVTGPHLQPQGPNSIPTPTASGFCPHPGSVALPHGVQGPQQASPVPGQIPIHRAQVPPTFQNNYHGSGWH</sequence>
<protein>
    <recommendedName>
        <fullName evidence="24">Inactive histone-lysine N-methyltransferase 2E</fullName>
        <shortName evidence="24">Inactive lysine N-methyltransferase 2E</shortName>
    </recommendedName>
    <alternativeName>
        <fullName>Myeloid/lymphoid or mixed-lineage leukemia protein 5</fullName>
    </alternativeName>
</protein>
<organism>
    <name type="scientific">Homo sapiens</name>
    <name type="common">Human</name>
    <dbReference type="NCBI Taxonomy" id="9606"/>
    <lineage>
        <taxon>Eukaryota</taxon>
        <taxon>Metazoa</taxon>
        <taxon>Chordata</taxon>
        <taxon>Craniata</taxon>
        <taxon>Vertebrata</taxon>
        <taxon>Euteleostomi</taxon>
        <taxon>Mammalia</taxon>
        <taxon>Eutheria</taxon>
        <taxon>Euarchontoglires</taxon>
        <taxon>Primates</taxon>
        <taxon>Haplorrhini</taxon>
        <taxon>Catarrhini</taxon>
        <taxon>Hominidae</taxon>
        <taxon>Homo</taxon>
    </lineage>
</organism>
<proteinExistence type="evidence at protein level"/>
<comment type="function">
    <text evidence="1 7 9 12 13 15">Associates with chromatin regions downstream of transcriptional start sites of active genes and thus regulates gene transcription (PubMed:23629655, PubMed:23798402, PubMed:24130829). Chromatin interaction is mediated via the binding to tri-methylated histone H3 at 'Lys-4' (H3K4me3) (PubMed:23798402, PubMed:24130829). Key regulator of hematopoiesis involved in terminal myeloid differentiation and in the regulation of hematopoietic stem cell (HSCs) self-renewal by a mechanism that involves DNA methylation (By similarity). Also acts as an important cell cycle regulator, participating in cell cycle regulatory network machinery at multiple cell cycle stages including G1/S transition, S phase progression and mitotic entry (PubMed:14718661, PubMed:18573682, PubMed:19264965, PubMed:23629655). Recruited to E2F1 responsive promoters by HCFC1 where it stimulates tri-methylation of histone H3 at 'Lys-4' and transcriptional activation and thereby facilitates G1 to S phase transition (PubMed:23629655). During myoblast differentiation, required to suppress inappropriate expression of S-phase-promoting genes and maintain expression of determination genes in quiescent cells (By similarity).</text>
</comment>
<comment type="function">
    <molecule>Isoform NKp44L</molecule>
    <text evidence="14">Cellular ligand for NCR2/NKp44, may play a role as a danger signal in cytotoxicity and NK-cell-mediated innate immunity.</text>
</comment>
<comment type="subunit">
    <text evidence="12 17">Component of a complex composed of KMT2E (isoform 3), OGT and USP7; the complex stabilizes KMT2E, preventing KMT2E ubiquitination and proteasomal-mediated degradation (PubMed:26678539). Isoform 3 interacts (via N-terminus) with OGT (via TRP repeats) (PubMed:23629655, PubMed:26678539). Isoform 3 interacts with deubiquitinating enzyme USP7 (via MATH domain) (PubMed:26678539). Isoform 3 interacts (via HBM motif) with HCFC1 (via Kelch domain) (PubMed:23629655). Isoform 3 interacts with E2F1; the interaction is probably indirect and is mediated via HCFC1 (PubMed:23629655).</text>
</comment>
<comment type="interaction">
    <interactant intactId="EBI-2689959">
        <id>Q8IZD2</id>
    </interactant>
    <interactant intactId="EBI-366083">
        <id>P04637</id>
        <label>TP53</label>
    </interactant>
    <organismsDiffer>false</organismsDiffer>
    <experiments>4</experiments>
</comment>
<comment type="interaction">
    <interactant intactId="EBI-12900093">
        <id>Q8IZD2-3</id>
    </interactant>
    <interactant intactId="EBI-12069500">
        <id>Q9HD20-3</id>
        <label>ATP13A1</label>
    </interactant>
    <organismsDiffer>false</organismsDiffer>
    <experiments>3</experiments>
</comment>
<comment type="interaction">
    <interactant intactId="EBI-15014150">
        <id>Q8IZD2-8</id>
    </interactant>
    <interactant intactId="EBI-14058375">
        <id>O95944</id>
        <label>NCR2</label>
    </interactant>
    <organismsDiffer>false</organismsDiffer>
    <experiments>4</experiments>
</comment>
<comment type="subcellular location">
    <subcellularLocation>
        <location evidence="13">Chromosome</location>
    </subcellularLocation>
    <subcellularLocation>
        <location evidence="13">Cytoplasm</location>
        <location evidence="13">Cytoskeleton</location>
        <location evidence="13">Microtubule organizing center</location>
        <location evidence="13">Centrosome</location>
    </subcellularLocation>
    <subcellularLocation>
        <location evidence="7">Nucleus speckle</location>
    </subcellularLocation>
    <text evidence="7 13">Absent from the nucleolus (PubMed:14718661). Localizes to chromosome during interphase and to centrosomes during mitosis (PubMed:23798402). Dissociation from mitotic chromosome is likely due to histone H3 phosphorylation on 'Thr-3' and 'Thr-6' (PubMed:23798402).</text>
</comment>
<comment type="subcellular location">
    <molecule>Isoform 3</molecule>
    <subcellularLocation>
        <location evidence="12 17">Nucleus</location>
        <location evidence="12 17">Nucleoplasm</location>
    </subcellularLocation>
    <subcellularLocation>
        <location evidence="13">Nucleus speckle</location>
    </subcellularLocation>
    <text evidence="12 13">Absent from the nucleolus (PubMed:23629655). Localizes to chromosome during interphase and to nucleus speckle during mitosis (PubMed:23798402). Dissociation from mitotic chromosome is likely due to histone H3 phosphorylation on 'Thr-3' and 'Thr-6' (PubMed:23798402).</text>
</comment>
<comment type="subcellular location">
    <molecule>Isoform NKp44L</molecule>
    <subcellularLocation>
        <location evidence="14">Cytoplasm</location>
    </subcellularLocation>
    <subcellularLocation>
        <location evidence="14">Cell membrane</location>
        <topology evidence="14">Peripheral membrane protein</topology>
    </subcellularLocation>
</comment>
<comment type="alternative products">
    <event type="alternative splicing"/>
    <isoform>
        <id>Q8IZD2-1</id>
        <name evidence="6 20">1</name>
        <sequence type="displayed"/>
    </isoform>
    <isoform>
        <id>Q8IZD2-2</id>
        <name evidence="20">2</name>
        <sequence type="described" ref="VSP_052803"/>
    </isoform>
    <isoform>
        <id>Q8IZD2-3</id>
        <name evidence="8">3</name>
        <sequence type="described" ref="VSP_052804 VSP_052805"/>
    </isoform>
    <isoform>
        <id>Q8IZD2-4</id>
        <name evidence="20">4</name>
        <sequence type="described" ref="VSP_052806 VSP_052807"/>
    </isoform>
    <isoform>
        <id>Q8IZD2-5</id>
        <name evidence="20">5</name>
        <sequence type="described" ref="VSP_052810 VSP_052812"/>
    </isoform>
    <isoform>
        <id>Q8IZD2-6</id>
        <name evidence="20">6</name>
        <sequence type="described" ref="VSP_052809 VSP_052811"/>
    </isoform>
    <isoform>
        <id>Q8IZD2-7</id>
        <name evidence="20">7</name>
        <sequence type="described" ref="VSP_052808"/>
    </isoform>
    <isoform>
        <id>Q8IZD2-8</id>
        <name evidence="22">NKp44L</name>
        <sequence type="described" ref="VSP_053834 VSP_053835"/>
    </isoform>
</comment>
<comment type="tissue specificity">
    <text evidence="6 14">Widely expressed in both adult and fetal tissues (PubMed:12101424, PubMed:23958951). Highest levels of expression observed in fetal thymus and kidney and in adult hematopoietic tissues, jejunum and cerebellum (PubMed:12101424, PubMed:23958951). Isoform NKp44L: Not detected on circulating cells from healthy individuals, but is expressed on a large panel of tumor and transformed cells (PubMed:23958951).</text>
</comment>
<comment type="domain">
    <text evidence="13 15">The PHD-type domain binds specifically histone H3 tri-methylated at 'Lys-4' (H3K4me3), thus promoting binding to chromatin.</text>
</comment>
<comment type="domain">
    <text evidence="18">The SET domain does not bind the methyl group donor S-adenosyl-L-methionine and histone 3 H3K4 peptide as a large loop prevents the docking of the 'Lys-4' side chain.</text>
</comment>
<comment type="domain">
    <text evidence="13">The C-terminus domain is responsible for the localization to the centrosome during mitosis.</text>
</comment>
<comment type="PTM">
    <text evidence="17">Ubiquitinated. Deubiquitinated by USP7.</text>
</comment>
<comment type="PTM">
    <text evidence="17">O-glycosylated at Ser-435 and Thr-440 in the SET domain by OGT which probably prevents KMT2E proteasomal-mediated degradation.</text>
</comment>
<comment type="disease" evidence="19">
    <disease id="DI-05620">
        <name>O'Donnell-Luria-Rodan syndrome</name>
        <acronym>ODLURO</acronym>
        <description>A neurodevelopmental disorder characterized by global developmental delay, speech delay, intellectual disability and a subtle facial gestalt. Additional common features include autism, seizures, hypotonia and functional gastrointestinal abnormalities.</description>
        <dbReference type="MIM" id="618512"/>
    </disease>
    <text>The disease is caused by variants affecting the gene represented in this entry.</text>
</comment>
<comment type="similarity">
    <text evidence="4">Belongs to the class V-like SAM-binding methyltransferase superfamily. Histone-lysine methyltransferase family. TRX/MLL subfamily.</text>
</comment>
<comment type="caution">
    <text evidence="10 11 16 18">Isoform 3 was originally thought to display histone methyltransferase activity only following O-glycosylation at Thr-440 (PubMed:19377461). However, the corresponding article has been retracted (PubMed:24336203). Does not exhibit histone methyltransferase towards histone H3 in vitro (PubMed:19264965, PubMed:27812132). The isolated catalytic SET domain lacks binding activity towards cofactor S-adenosyl-L-methionine; instead of the highly conserved XGXG, Y and NH motifs, KMT2E displays NKKI (Asn-339-Ile-342), F (Phe-381) and RR (Arg-408-Arg-409) motifs (PubMed:27812132). Also lacks binding activity towards histone H3 due to a poor conservation of the key residues involved in the binding and the presence of large loop which prevents the docking of the H3 'Lys-4' side chain (PubMed:27812132).</text>
</comment>
<comment type="sequence caution" evidence="24">
    <conflict type="miscellaneous discrepancy">
        <sequence resource="EMBL-CDS" id="AAH01296"/>
    </conflict>
    <text>Contaminating sequence. Potential poly-A sequence starting in position 492.</text>
</comment>
<comment type="sequence caution" evidence="24">
    <conflict type="miscellaneous discrepancy">
        <sequence resource="EMBL-CDS" id="AAH40004"/>
    </conflict>
    <text>Contaminating sequence. Potential poly-A sequence starting in position 227.</text>
</comment>
<comment type="sequence caution" evidence="24">
    <conflict type="miscellaneous discrepancy">
        <sequence resource="EMBL-CDS" id="AAH53906"/>
    </conflict>
    <text>Contaminating sequence. Potential poly-A sequence starting in position 227.</text>
</comment>
<comment type="sequence caution" evidence="24">
    <conflict type="miscellaneous discrepancy">
        <sequence resource="EMBL-CDS" id="AAI42988"/>
    </conflict>
    <text>Contaminating sequence. Potential poly-A sequence starting in position 492.</text>
</comment>
<name>KMT2E_HUMAN</name>